<proteinExistence type="evidence at transcript level"/>
<gene>
    <name type="primary">NSMCE1</name>
</gene>
<comment type="function">
    <text evidence="1">RING-type zinc finger-containing E3 ubiquitin ligase that assembles with melanoma antigen protein (MAGE) to catalyze the direct transfer of ubiquitin from E2 ubiquitin-conjugating enzyme to a specific substrate. Within MAGE-RING ubiquitin ligase complex, MAGE stimulates and specifies ubiquitin ligase activity likely through recruitment and/or stabilization of the E2 ubiquitin-conjugating enzyme at the E3:substrate complex. Involved in maintenance of genome integrity, DNA damage response and DNA repair. NSMCE3/MAGEG1 and NSMCE1 ubiquitin ligase are components of SMC5-SMC6 complex and may positively regulate homologous recombination-mediated DNA repair.</text>
</comment>
<comment type="catalytic activity">
    <reaction evidence="1">
        <text>S-ubiquitinyl-[E2 ubiquitin-conjugating enzyme]-L-cysteine + [acceptor protein]-L-lysine = [E2 ubiquitin-conjugating enzyme]-L-cysteine + N(6)-ubiquitinyl-[acceptor protein]-L-lysine.</text>
        <dbReference type="EC" id="2.3.2.27"/>
    </reaction>
</comment>
<comment type="subunit">
    <text evidence="1">Component of the SMC5-SMC6 complex which consists at least of SMC5, SMC6, NSMCE2, NSMCE1, NSMCE4A or EID3 and NSMCE3. NSMCE1, NSMCE4A or EID3 and NSMCE3 probably form a subcomplex that bridges the head domains of the SMC5-SMC6 heterodimer. Interacts with NSMCE3.</text>
</comment>
<comment type="subcellular location">
    <subcellularLocation>
        <location evidence="1">Nucleus</location>
    </subcellularLocation>
    <subcellularLocation>
        <location evidence="1">Chromosome</location>
        <location evidence="1">Telomere</location>
    </subcellularLocation>
</comment>
<comment type="PTM">
    <text evidence="1">Ubiquitinated.</text>
</comment>
<comment type="similarity">
    <text evidence="4">Belongs to the NSE1 family.</text>
</comment>
<comment type="sequence caution" evidence="4">
    <conflict type="erroneous initiation">
        <sequence resource="EMBL-CDS" id="AAI02215"/>
    </conflict>
    <text>Truncated N-terminus.</text>
</comment>
<organism>
    <name type="scientific">Bos taurus</name>
    <name type="common">Bovine</name>
    <dbReference type="NCBI Taxonomy" id="9913"/>
    <lineage>
        <taxon>Eukaryota</taxon>
        <taxon>Metazoa</taxon>
        <taxon>Chordata</taxon>
        <taxon>Craniata</taxon>
        <taxon>Vertebrata</taxon>
        <taxon>Euteleostomi</taxon>
        <taxon>Mammalia</taxon>
        <taxon>Eutheria</taxon>
        <taxon>Laurasiatheria</taxon>
        <taxon>Artiodactyla</taxon>
        <taxon>Ruminantia</taxon>
        <taxon>Pecora</taxon>
        <taxon>Bovidae</taxon>
        <taxon>Bovinae</taxon>
        <taxon>Bos</taxon>
    </lineage>
</organism>
<name>NSE1_BOVIN</name>
<protein>
    <recommendedName>
        <fullName>Non-structural maintenance of chromosomes element 1 homolog</fullName>
        <shortName>Non-SMC element 1 homolog</shortName>
        <ecNumber evidence="1">2.3.2.27</ecNumber>
    </recommendedName>
</protein>
<accession>Q3T0X7</accession>
<sequence length="266" mass="30691">MQGNTRRTGVMTDVHRRFLQLLMTHGVLEECDVKRLQKHCYKVHDCNATVEKLEDFINTINSVLESLYIEIKKGVTEDDGRPIYALVNLATTSVSKMASDFAENELDLFRKALELIIDSDTGFASSTNILNLVDQLKGKKMRKKEAEHVLQKFVQNKWLIEKEGEFTLHGRAILEMDQYIRETYPDAVKVCNICRSLLIQGQSCETCGIRMHLPCVAKYFQSSSEPHCPHCNDYWPHEVPEVFDPEKERETGMSRSNKRPSRSRQH</sequence>
<feature type="chain" id="PRO_0000270943" description="Non-structural maintenance of chromosomes element 1 homolog">
    <location>
        <begin position="1"/>
        <end position="266"/>
    </location>
</feature>
<feature type="zinc finger region" description="RING-type; atypical" evidence="2">
    <location>
        <begin position="191"/>
        <end position="232"/>
    </location>
</feature>
<feature type="region of interest" description="Interaction with NSMCE3" evidence="1">
    <location>
        <begin position="1"/>
        <end position="102"/>
    </location>
</feature>
<feature type="region of interest" description="Disordered" evidence="3">
    <location>
        <begin position="243"/>
        <end position="266"/>
    </location>
</feature>
<feature type="compositionally biased region" description="Basic and acidic residues" evidence="3">
    <location>
        <begin position="243"/>
        <end position="252"/>
    </location>
</feature>
<feature type="compositionally biased region" description="Basic residues" evidence="3">
    <location>
        <begin position="256"/>
        <end position="266"/>
    </location>
</feature>
<dbReference type="EC" id="2.3.2.27" evidence="1"/>
<dbReference type="EMBL" id="BC102214">
    <property type="protein sequence ID" value="AAI02215.1"/>
    <property type="status" value="ALT_INIT"/>
    <property type="molecule type" value="mRNA"/>
</dbReference>
<dbReference type="RefSeq" id="NP_001030483.1">
    <property type="nucleotide sequence ID" value="NM_001035406.1"/>
</dbReference>
<dbReference type="SMR" id="Q3T0X7"/>
<dbReference type="FunCoup" id="Q3T0X7">
    <property type="interactions" value="2534"/>
</dbReference>
<dbReference type="STRING" id="9913.ENSBTAP00000071834"/>
<dbReference type="PaxDb" id="9913-ENSBTAP00000051539"/>
<dbReference type="GeneID" id="534249"/>
<dbReference type="KEGG" id="bta:534249"/>
<dbReference type="CTD" id="197370"/>
<dbReference type="eggNOG" id="KOG4718">
    <property type="taxonomic scope" value="Eukaryota"/>
</dbReference>
<dbReference type="InParanoid" id="Q3T0X7"/>
<dbReference type="OrthoDB" id="185455at2759"/>
<dbReference type="Proteomes" id="UP000009136">
    <property type="component" value="Unplaced"/>
</dbReference>
<dbReference type="GO" id="GO:0000781">
    <property type="term" value="C:chromosome, telomeric region"/>
    <property type="evidence" value="ECO:0007669"/>
    <property type="project" value="UniProtKB-SubCell"/>
</dbReference>
<dbReference type="GO" id="GO:0005634">
    <property type="term" value="C:nucleus"/>
    <property type="evidence" value="ECO:0000318"/>
    <property type="project" value="GO_Central"/>
</dbReference>
<dbReference type="GO" id="GO:0030915">
    <property type="term" value="C:Smc5-Smc6 complex"/>
    <property type="evidence" value="ECO:0000250"/>
    <property type="project" value="UniProtKB"/>
</dbReference>
<dbReference type="GO" id="GO:0046983">
    <property type="term" value="F:protein dimerization activity"/>
    <property type="evidence" value="ECO:0000250"/>
    <property type="project" value="UniProtKB"/>
</dbReference>
<dbReference type="GO" id="GO:0061630">
    <property type="term" value="F:ubiquitin protein ligase activity"/>
    <property type="evidence" value="ECO:0000250"/>
    <property type="project" value="UniProtKB"/>
</dbReference>
<dbReference type="GO" id="GO:0004842">
    <property type="term" value="F:ubiquitin-protein transferase activity"/>
    <property type="evidence" value="ECO:0000318"/>
    <property type="project" value="GO_Central"/>
</dbReference>
<dbReference type="GO" id="GO:0008270">
    <property type="term" value="F:zinc ion binding"/>
    <property type="evidence" value="ECO:0007669"/>
    <property type="project" value="UniProtKB-KW"/>
</dbReference>
<dbReference type="GO" id="GO:0006974">
    <property type="term" value="P:DNA damage response"/>
    <property type="evidence" value="ECO:0000250"/>
    <property type="project" value="UniProtKB"/>
</dbReference>
<dbReference type="GO" id="GO:0000724">
    <property type="term" value="P:double-strand break repair via homologous recombination"/>
    <property type="evidence" value="ECO:0000318"/>
    <property type="project" value="GO_Central"/>
</dbReference>
<dbReference type="CDD" id="cd16493">
    <property type="entry name" value="RING-CH-C4HC3_NSE1"/>
    <property type="match status" value="1"/>
</dbReference>
<dbReference type="FunFam" id="1.10.10.10:FF:000270">
    <property type="entry name" value="Non-structural maintenance of chromosomes element 1 homolog"/>
    <property type="match status" value="1"/>
</dbReference>
<dbReference type="FunFam" id="3.90.1150.220:FF:000001">
    <property type="entry name" value="Non-structural maintenance of chromosomes element 1 homolog"/>
    <property type="match status" value="1"/>
</dbReference>
<dbReference type="FunFam" id="3.30.40.10:FF:000298">
    <property type="entry name" value="non-structural maintenance of chromosomes element 1 homolog"/>
    <property type="match status" value="1"/>
</dbReference>
<dbReference type="Gene3D" id="3.90.1150.220">
    <property type="match status" value="1"/>
</dbReference>
<dbReference type="Gene3D" id="1.10.10.10">
    <property type="entry name" value="Winged helix-like DNA-binding domain superfamily/Winged helix DNA-binding domain"/>
    <property type="match status" value="1"/>
</dbReference>
<dbReference type="Gene3D" id="3.30.40.10">
    <property type="entry name" value="Zinc/RING finger domain, C3HC4 (zinc finger)"/>
    <property type="match status" value="1"/>
</dbReference>
<dbReference type="InterPro" id="IPR046349">
    <property type="entry name" value="C1-like_sf"/>
</dbReference>
<dbReference type="InterPro" id="IPR011513">
    <property type="entry name" value="Nse1"/>
</dbReference>
<dbReference type="InterPro" id="IPR014857">
    <property type="entry name" value="Nse1_RING_C4HC3-type"/>
</dbReference>
<dbReference type="InterPro" id="IPR002219">
    <property type="entry name" value="PE/DAG-bd"/>
</dbReference>
<dbReference type="InterPro" id="IPR036388">
    <property type="entry name" value="WH-like_DNA-bd_sf"/>
</dbReference>
<dbReference type="InterPro" id="IPR001841">
    <property type="entry name" value="Znf_RING"/>
</dbReference>
<dbReference type="InterPro" id="IPR013083">
    <property type="entry name" value="Znf_RING/FYVE/PHD"/>
</dbReference>
<dbReference type="PANTHER" id="PTHR20973">
    <property type="entry name" value="NON-SMC ELEMENT 1-RELATED"/>
    <property type="match status" value="1"/>
</dbReference>
<dbReference type="PANTHER" id="PTHR20973:SF0">
    <property type="entry name" value="NON-STRUCTURAL MAINTENANCE OF CHROMOSOMES ELEMENT 1 HOMOLOG"/>
    <property type="match status" value="1"/>
</dbReference>
<dbReference type="Pfam" id="PF07574">
    <property type="entry name" value="SMC_Nse1"/>
    <property type="match status" value="1"/>
</dbReference>
<dbReference type="Pfam" id="PF08746">
    <property type="entry name" value="zf-RING-like"/>
    <property type="match status" value="1"/>
</dbReference>
<dbReference type="SUPFAM" id="SSF57889">
    <property type="entry name" value="Cysteine-rich domain"/>
    <property type="match status" value="1"/>
</dbReference>
<dbReference type="PROSITE" id="PS50089">
    <property type="entry name" value="ZF_RING_2"/>
    <property type="match status" value="1"/>
</dbReference>
<evidence type="ECO:0000250" key="1">
    <source>
        <dbReference type="UniProtKB" id="Q8WV22"/>
    </source>
</evidence>
<evidence type="ECO:0000255" key="2">
    <source>
        <dbReference type="PROSITE-ProRule" id="PRU00175"/>
    </source>
</evidence>
<evidence type="ECO:0000256" key="3">
    <source>
        <dbReference type="SAM" id="MobiDB-lite"/>
    </source>
</evidence>
<evidence type="ECO:0000305" key="4"/>
<reference key="1">
    <citation type="submission" date="2005-08" db="EMBL/GenBank/DDBJ databases">
        <authorList>
            <consortium name="NIH - Mammalian Gene Collection (MGC) project"/>
        </authorList>
    </citation>
    <scope>NUCLEOTIDE SEQUENCE [LARGE SCALE MRNA]</scope>
    <source>
        <strain>Crossbred X Angus</strain>
        <tissue>Ileum</tissue>
    </source>
</reference>
<keyword id="KW-0158">Chromosome</keyword>
<keyword id="KW-0227">DNA damage</keyword>
<keyword id="KW-0233">DNA recombination</keyword>
<keyword id="KW-0234">DNA repair</keyword>
<keyword id="KW-0479">Metal-binding</keyword>
<keyword id="KW-0539">Nucleus</keyword>
<keyword id="KW-1185">Reference proteome</keyword>
<keyword id="KW-0779">Telomere</keyword>
<keyword id="KW-0808">Transferase</keyword>
<keyword id="KW-0832">Ubl conjugation</keyword>
<keyword id="KW-0833">Ubl conjugation pathway</keyword>
<keyword id="KW-0862">Zinc</keyword>
<keyword id="KW-0863">Zinc-finger</keyword>